<sequence length="244" mass="28308">MEDAGEHLRCNDNVNDEERLPLEFMIGNSTSTAELQPPPPFLVKTYKVVEDPTTDGVISWNEYGTGFVVWQPAEFARDLLPTLFKHCNFSSFVRQLNTYGFRKVTTIRWEFSNEMFRKGQRELMSNIRRRKSQHWSHNKSNHQVVPTTTMVNQEGHQRIGIDHHHEDQQSSATSSSFVYTALLDENKCLKNENELLSCELGKTKKKCKQLMELVERYRGEDEDATDESDDEEDEGLKLFGVKLE</sequence>
<gene>
    <name type="primary">HSFB3</name>
    <name type="synonym">HSF05</name>
    <name type="ordered locus">At2g41690</name>
    <name type="ORF">T32G6.21</name>
</gene>
<reference key="1">
    <citation type="journal article" date="1999" name="Nature">
        <title>Sequence and analysis of chromosome 2 of the plant Arabidopsis thaliana.</title>
        <authorList>
            <person name="Lin X."/>
            <person name="Kaul S."/>
            <person name="Rounsley S.D."/>
            <person name="Shea T.P."/>
            <person name="Benito M.-I."/>
            <person name="Town C.D."/>
            <person name="Fujii C.Y."/>
            <person name="Mason T.M."/>
            <person name="Bowman C.L."/>
            <person name="Barnstead M.E."/>
            <person name="Feldblyum T.V."/>
            <person name="Buell C.R."/>
            <person name="Ketchum K.A."/>
            <person name="Lee J.J."/>
            <person name="Ronning C.M."/>
            <person name="Koo H.L."/>
            <person name="Moffat K.S."/>
            <person name="Cronin L.A."/>
            <person name="Shen M."/>
            <person name="Pai G."/>
            <person name="Van Aken S."/>
            <person name="Umayam L."/>
            <person name="Tallon L.J."/>
            <person name="Gill J.E."/>
            <person name="Adams M.D."/>
            <person name="Carrera A.J."/>
            <person name="Creasy T.H."/>
            <person name="Goodman H.M."/>
            <person name="Somerville C.R."/>
            <person name="Copenhaver G.P."/>
            <person name="Preuss D."/>
            <person name="Nierman W.C."/>
            <person name="White O."/>
            <person name="Eisen J.A."/>
            <person name="Salzberg S.L."/>
            <person name="Fraser C.M."/>
            <person name="Venter J.C."/>
        </authorList>
    </citation>
    <scope>NUCLEOTIDE SEQUENCE [LARGE SCALE GENOMIC DNA]</scope>
    <source>
        <strain>cv. Columbia</strain>
    </source>
</reference>
<reference key="2">
    <citation type="journal article" date="2017" name="Plant J.">
        <title>Araport11: a complete reannotation of the Arabidopsis thaliana reference genome.</title>
        <authorList>
            <person name="Cheng C.Y."/>
            <person name="Krishnakumar V."/>
            <person name="Chan A.P."/>
            <person name="Thibaud-Nissen F."/>
            <person name="Schobel S."/>
            <person name="Town C.D."/>
        </authorList>
    </citation>
    <scope>GENOME REANNOTATION</scope>
    <source>
        <strain>cv. Columbia</strain>
    </source>
</reference>
<reference key="3">
    <citation type="submission" date="2006-11" db="EMBL/GenBank/DDBJ databases">
        <title>Arabidopsis ORF clones.</title>
        <authorList>
            <person name="Bautista V.R."/>
            <person name="Kim C.J."/>
            <person name="Chen H."/>
            <person name="Quinitio C."/>
            <person name="Ecker J.R."/>
        </authorList>
    </citation>
    <scope>NUCLEOTIDE SEQUENCE [LARGE SCALE MRNA]</scope>
    <source>
        <strain>cv. Columbia</strain>
    </source>
</reference>
<reference key="4">
    <citation type="journal article" date="2001" name="Cell Stress Chaperones">
        <title>Arabidopsis and the heat stress transcription factor world: how many heat stress transcription factors do we need?</title>
        <authorList>
            <person name="Nover L."/>
            <person name="Bharti K."/>
            <person name="Doering P."/>
            <person name="Mishra S.K."/>
            <person name="Ganguli A."/>
            <person name="Scharf K.-D."/>
        </authorList>
    </citation>
    <scope>GENE FAMILY</scope>
    <scope>NOMENCLATURE</scope>
</reference>
<reference key="5">
    <citation type="journal article" date="2008" name="J. Genet. Genomics">
        <title>Genome-wide analysis of heat shock transcription factor families in rice and Arabidopsis.</title>
        <authorList>
            <person name="Guo J."/>
            <person name="Wu J."/>
            <person name="Ji Q."/>
            <person name="Wang C."/>
            <person name="Luo L."/>
            <person name="Yuan Y."/>
            <person name="Wang Y."/>
            <person name="Wang J."/>
        </authorList>
    </citation>
    <scope>GENE FAMILY</scope>
    <scope>NOMENCLATURE</scope>
</reference>
<feature type="chain" id="PRO_0000270812" description="Heat stress transcription factor B-3">
    <location>
        <begin position="1"/>
        <end position="244"/>
    </location>
</feature>
<feature type="DNA-binding region" evidence="1">
    <location>
        <begin position="38"/>
        <end position="132"/>
    </location>
</feature>
<feature type="region of interest" description="Hydrophobic repeat HR-A/B">
    <location>
        <begin position="173"/>
        <end position="218"/>
    </location>
</feature>
<feature type="region of interest" description="Disordered" evidence="3">
    <location>
        <begin position="216"/>
        <end position="244"/>
    </location>
</feature>
<feature type="short sequence motif" description="Nuclear localization signal" evidence="2">
    <location>
        <begin position="202"/>
        <end position="208"/>
    </location>
</feature>
<feature type="short sequence motif" description="Nuclear export signal" evidence="2">
    <location>
        <begin position="236"/>
        <end position="243"/>
    </location>
</feature>
<feature type="compositionally biased region" description="Acidic residues" evidence="3">
    <location>
        <begin position="220"/>
        <end position="234"/>
    </location>
</feature>
<name>HSFB3_ARATH</name>
<accession>O22230</accession>
<organism>
    <name type="scientific">Arabidopsis thaliana</name>
    <name type="common">Mouse-ear cress</name>
    <dbReference type="NCBI Taxonomy" id="3702"/>
    <lineage>
        <taxon>Eukaryota</taxon>
        <taxon>Viridiplantae</taxon>
        <taxon>Streptophyta</taxon>
        <taxon>Embryophyta</taxon>
        <taxon>Tracheophyta</taxon>
        <taxon>Spermatophyta</taxon>
        <taxon>Magnoliopsida</taxon>
        <taxon>eudicotyledons</taxon>
        <taxon>Gunneridae</taxon>
        <taxon>Pentapetalae</taxon>
        <taxon>rosids</taxon>
        <taxon>malvids</taxon>
        <taxon>Brassicales</taxon>
        <taxon>Brassicaceae</taxon>
        <taxon>Camelineae</taxon>
        <taxon>Arabidopsis</taxon>
    </lineage>
</organism>
<protein>
    <recommendedName>
        <fullName>Heat stress transcription factor B-3</fullName>
        <shortName>AtHsfB3</shortName>
    </recommendedName>
    <alternativeName>
        <fullName>AtHsf-05</fullName>
    </alternativeName>
</protein>
<keyword id="KW-0963">Cytoplasm</keyword>
<keyword id="KW-0238">DNA-binding</keyword>
<keyword id="KW-0539">Nucleus</keyword>
<keyword id="KW-0597">Phosphoprotein</keyword>
<keyword id="KW-1185">Reference proteome</keyword>
<keyword id="KW-0346">Stress response</keyword>
<keyword id="KW-0804">Transcription</keyword>
<keyword id="KW-0805">Transcription regulation</keyword>
<comment type="function">
    <text>Transcriptional regulator that specifically binds DNA sequence 5'-AGAAnnTTCT-3' known as heat shock promoter elements (HSE).</text>
</comment>
<comment type="subunit">
    <text evidence="1">Homotrimer.</text>
</comment>
<comment type="interaction">
    <interactant intactId="EBI-15192145">
        <id>O22230</id>
    </interactant>
    <interactant intactId="EBI-15192535">
        <id>F4JI72</id>
        <label>At4g03250</label>
    </interactant>
    <organismsDiffer>false</organismsDiffer>
    <experiments>3</experiments>
</comment>
<comment type="interaction">
    <interactant intactId="EBI-15192145">
        <id>O22230</id>
    </interactant>
    <interactant intactId="EBI-4424563">
        <id>Q93Z00</id>
        <label>TCP14</label>
    </interactant>
    <organismsDiffer>false</organismsDiffer>
    <experiments>4</experiments>
</comment>
<comment type="interaction">
    <interactant intactId="EBI-15192145">
        <id>O22230</id>
    </interactant>
    <interactant intactId="EBI-15192325">
        <id>Q8LPR5</id>
        <label>TCP4</label>
    </interactant>
    <organismsDiffer>false</organismsDiffer>
    <experiments>3</experiments>
</comment>
<comment type="interaction">
    <interactant intactId="EBI-15192145">
        <id>O22230</id>
    </interactant>
    <interactant intactId="EBI-9838721">
        <id>O64647</id>
        <label>TCP9</label>
    </interactant>
    <organismsDiffer>false</organismsDiffer>
    <experiments>3</experiments>
</comment>
<comment type="subcellular location">
    <subcellularLocation>
        <location evidence="4">Cytoplasm</location>
    </subcellularLocation>
    <subcellularLocation>
        <location evidence="4">Nucleus</location>
    </subcellularLocation>
</comment>
<comment type="domain">
    <text>The hydrophobic-rich region (HR-A/B) corresponds to the oligomerization domain.</text>
</comment>
<comment type="PTM">
    <text evidence="1">Exhibits temperature-dependent phosphorylation.</text>
</comment>
<comment type="similarity">
    <text evidence="4">Belongs to the HSF family. Class B subfamily.</text>
</comment>
<proteinExistence type="evidence at protein level"/>
<dbReference type="EMBL" id="AC002510">
    <property type="protein sequence ID" value="AAB84350.1"/>
    <property type="molecule type" value="Genomic_DNA"/>
</dbReference>
<dbReference type="EMBL" id="CP002685">
    <property type="protein sequence ID" value="AEC10016.1"/>
    <property type="molecule type" value="Genomic_DNA"/>
</dbReference>
<dbReference type="EMBL" id="BT029452">
    <property type="protein sequence ID" value="ABK59681.1"/>
    <property type="molecule type" value="mRNA"/>
</dbReference>
<dbReference type="PIR" id="T00825">
    <property type="entry name" value="T00825"/>
</dbReference>
<dbReference type="RefSeq" id="NP_181700.1">
    <property type="nucleotide sequence ID" value="NM_129732.2"/>
</dbReference>
<dbReference type="SMR" id="O22230"/>
<dbReference type="BioGRID" id="4104">
    <property type="interactions" value="21"/>
</dbReference>
<dbReference type="FunCoup" id="O22230">
    <property type="interactions" value="8"/>
</dbReference>
<dbReference type="IntAct" id="O22230">
    <property type="interactions" value="21"/>
</dbReference>
<dbReference type="STRING" id="3702.O22230"/>
<dbReference type="PaxDb" id="3702-AT2G41690.1"/>
<dbReference type="ProteomicsDB" id="228751"/>
<dbReference type="EnsemblPlants" id="AT2G41690.1">
    <property type="protein sequence ID" value="AT2G41690.1"/>
    <property type="gene ID" value="AT2G41690"/>
</dbReference>
<dbReference type="GeneID" id="818767"/>
<dbReference type="Gramene" id="AT2G41690.1">
    <property type="protein sequence ID" value="AT2G41690.1"/>
    <property type="gene ID" value="AT2G41690"/>
</dbReference>
<dbReference type="KEGG" id="ath:AT2G41690"/>
<dbReference type="Araport" id="AT2G41690"/>
<dbReference type="TAIR" id="AT2G41690">
    <property type="gene designation" value="HSFB3"/>
</dbReference>
<dbReference type="eggNOG" id="KOG0627">
    <property type="taxonomic scope" value="Eukaryota"/>
</dbReference>
<dbReference type="HOGENOM" id="CLU_030308_3_2_1"/>
<dbReference type="InParanoid" id="O22230"/>
<dbReference type="OMA" id="IRWEFSN"/>
<dbReference type="PhylomeDB" id="O22230"/>
<dbReference type="PRO" id="PR:O22230"/>
<dbReference type="Proteomes" id="UP000006548">
    <property type="component" value="Chromosome 2"/>
</dbReference>
<dbReference type="ExpressionAtlas" id="O22230">
    <property type="expression patterns" value="baseline and differential"/>
</dbReference>
<dbReference type="GO" id="GO:0005737">
    <property type="term" value="C:cytoplasm"/>
    <property type="evidence" value="ECO:0007669"/>
    <property type="project" value="UniProtKB-SubCell"/>
</dbReference>
<dbReference type="GO" id="GO:0005634">
    <property type="term" value="C:nucleus"/>
    <property type="evidence" value="ECO:0007669"/>
    <property type="project" value="UniProtKB-SubCell"/>
</dbReference>
<dbReference type="GO" id="GO:0003700">
    <property type="term" value="F:DNA-binding transcription factor activity"/>
    <property type="evidence" value="ECO:0000250"/>
    <property type="project" value="TAIR"/>
</dbReference>
<dbReference type="GO" id="GO:0043565">
    <property type="term" value="F:sequence-specific DNA binding"/>
    <property type="evidence" value="ECO:0007669"/>
    <property type="project" value="InterPro"/>
</dbReference>
<dbReference type="FunFam" id="1.10.10.10:FF:000037">
    <property type="entry name" value="Heat stress transcription factor B-4"/>
    <property type="match status" value="1"/>
</dbReference>
<dbReference type="Gene3D" id="1.10.10.10">
    <property type="entry name" value="Winged helix-like DNA-binding domain superfamily/Winged helix DNA-binding domain"/>
    <property type="match status" value="1"/>
</dbReference>
<dbReference type="InterPro" id="IPR000232">
    <property type="entry name" value="HSF_DNA-bd"/>
</dbReference>
<dbReference type="InterPro" id="IPR036388">
    <property type="entry name" value="WH-like_DNA-bd_sf"/>
</dbReference>
<dbReference type="InterPro" id="IPR036390">
    <property type="entry name" value="WH_DNA-bd_sf"/>
</dbReference>
<dbReference type="PANTHER" id="PTHR10015">
    <property type="entry name" value="HEAT SHOCK TRANSCRIPTION FACTOR"/>
    <property type="match status" value="1"/>
</dbReference>
<dbReference type="PANTHER" id="PTHR10015:SF285">
    <property type="entry name" value="HEAT STRESS TRANSCRIPTION FACTOR B-3"/>
    <property type="match status" value="1"/>
</dbReference>
<dbReference type="Pfam" id="PF00447">
    <property type="entry name" value="HSF_DNA-bind"/>
    <property type="match status" value="1"/>
</dbReference>
<dbReference type="PRINTS" id="PR00056">
    <property type="entry name" value="HSFDOMAIN"/>
</dbReference>
<dbReference type="SMART" id="SM00415">
    <property type="entry name" value="HSF"/>
    <property type="match status" value="1"/>
</dbReference>
<dbReference type="SUPFAM" id="SSF46785">
    <property type="entry name" value="Winged helix' DNA-binding domain"/>
    <property type="match status" value="1"/>
</dbReference>
<dbReference type="PROSITE" id="PS00434">
    <property type="entry name" value="HSF_DOMAIN"/>
    <property type="match status" value="1"/>
</dbReference>
<evidence type="ECO:0000250" key="1"/>
<evidence type="ECO:0000255" key="2"/>
<evidence type="ECO:0000256" key="3">
    <source>
        <dbReference type="SAM" id="MobiDB-lite"/>
    </source>
</evidence>
<evidence type="ECO:0000305" key="4"/>